<keyword id="KW-0010">Activator</keyword>
<keyword id="KW-1005">Bacterial flagellum biogenesis</keyword>
<keyword id="KW-0963">Cytoplasm</keyword>
<keyword id="KW-1015">Disulfide bond</keyword>
<keyword id="KW-0238">DNA-binding</keyword>
<keyword id="KW-0804">Transcription</keyword>
<keyword id="KW-0805">Transcription regulation</keyword>
<evidence type="ECO:0000255" key="1">
    <source>
        <dbReference type="HAMAP-Rule" id="MF_00725"/>
    </source>
</evidence>
<proteinExistence type="inferred from homology"/>
<accession>A9MU90</accession>
<name>FLHD_SALPB</name>
<comment type="function">
    <text evidence="1">Functions in complex with FlhC as a master transcriptional regulator that regulates transcription of several flagellar and non-flagellar operons by binding to their promoter region. Activates expression of class 2 flagellar genes, including fliA, which is a flagellum-specific sigma factor that turns on the class 3 genes. Also regulates genes whose products function in a variety of physiological pathways.</text>
</comment>
<comment type="subunit">
    <text evidence="1">Homodimer; disulfide-linked. Forms a heterohexamer composed of two FlhC and four FlhD subunits. Each FlhC binds a FlhD dimer, forming a heterotrimer, and a hexamer assembles by dimerization of two heterotrimers.</text>
</comment>
<comment type="subcellular location">
    <subcellularLocation>
        <location evidence="1">Cytoplasm</location>
    </subcellularLocation>
</comment>
<comment type="domain">
    <text evidence="1">The C-terminal region contains a putative helix-turn-helix (HTH) motif, suggesting that this region may bind DNA.</text>
</comment>
<comment type="similarity">
    <text evidence="1">Belongs to the FlhD family.</text>
</comment>
<dbReference type="EMBL" id="CP000886">
    <property type="protein sequence ID" value="ABX66646.1"/>
    <property type="molecule type" value="Genomic_DNA"/>
</dbReference>
<dbReference type="RefSeq" id="WP_001518146.1">
    <property type="nucleotide sequence ID" value="NC_010102.1"/>
</dbReference>
<dbReference type="SMR" id="A9MU90"/>
<dbReference type="KEGG" id="spq:SPAB_01234"/>
<dbReference type="PATRIC" id="fig|1016998.12.peg.1162"/>
<dbReference type="HOGENOM" id="CLU_144160_0_0_6"/>
<dbReference type="Proteomes" id="UP000008556">
    <property type="component" value="Chromosome"/>
</dbReference>
<dbReference type="GO" id="GO:0005737">
    <property type="term" value="C:cytoplasm"/>
    <property type="evidence" value="ECO:0007669"/>
    <property type="project" value="UniProtKB-SubCell"/>
</dbReference>
<dbReference type="GO" id="GO:0003677">
    <property type="term" value="F:DNA binding"/>
    <property type="evidence" value="ECO:0007669"/>
    <property type="project" value="UniProtKB-UniRule"/>
</dbReference>
<dbReference type="GO" id="GO:0044780">
    <property type="term" value="P:bacterial-type flagellum assembly"/>
    <property type="evidence" value="ECO:0007669"/>
    <property type="project" value="InterPro"/>
</dbReference>
<dbReference type="GO" id="GO:0045893">
    <property type="term" value="P:positive regulation of DNA-templated transcription"/>
    <property type="evidence" value="ECO:0007669"/>
    <property type="project" value="InterPro"/>
</dbReference>
<dbReference type="GO" id="GO:1902208">
    <property type="term" value="P:regulation of bacterial-type flagellum assembly"/>
    <property type="evidence" value="ECO:0007669"/>
    <property type="project" value="UniProtKB-UniRule"/>
</dbReference>
<dbReference type="Gene3D" id="1.10.4000.10">
    <property type="entry name" value="Flagellar transcriptional activator FlhD"/>
    <property type="match status" value="1"/>
</dbReference>
<dbReference type="HAMAP" id="MF_00725">
    <property type="entry name" value="FlhD"/>
    <property type="match status" value="1"/>
</dbReference>
<dbReference type="InterPro" id="IPR023559">
    <property type="entry name" value="Flagellar_FlhD"/>
</dbReference>
<dbReference type="InterPro" id="IPR036194">
    <property type="entry name" value="FlhD_sf"/>
</dbReference>
<dbReference type="NCBIfam" id="NF002783">
    <property type="entry name" value="PRK02909.1-1"/>
    <property type="match status" value="1"/>
</dbReference>
<dbReference type="Pfam" id="PF05247">
    <property type="entry name" value="FlhD"/>
    <property type="match status" value="1"/>
</dbReference>
<dbReference type="SUPFAM" id="SSF63592">
    <property type="entry name" value="Flagellar transcriptional activator FlhD"/>
    <property type="match status" value="1"/>
</dbReference>
<organism>
    <name type="scientific">Salmonella paratyphi B (strain ATCC BAA-1250 / SPB7)</name>
    <dbReference type="NCBI Taxonomy" id="1016998"/>
    <lineage>
        <taxon>Bacteria</taxon>
        <taxon>Pseudomonadati</taxon>
        <taxon>Pseudomonadota</taxon>
        <taxon>Gammaproteobacteria</taxon>
        <taxon>Enterobacterales</taxon>
        <taxon>Enterobacteriaceae</taxon>
        <taxon>Salmonella</taxon>
    </lineage>
</organism>
<protein>
    <recommendedName>
        <fullName evidence="1">Flagellar transcriptional regulator FlhD</fullName>
    </recommendedName>
</protein>
<gene>
    <name evidence="1" type="primary">flhD</name>
    <name type="ordered locus">SPAB_01234</name>
</gene>
<feature type="chain" id="PRO_1000083317" description="Flagellar transcriptional regulator FlhD">
    <location>
        <begin position="1"/>
        <end position="113"/>
    </location>
</feature>
<feature type="disulfide bond" description="Interchain" evidence="1">
    <location>
        <position position="65"/>
    </location>
</feature>
<reference key="1">
    <citation type="submission" date="2007-11" db="EMBL/GenBank/DDBJ databases">
        <authorList>
            <consortium name="The Salmonella enterica serovar Paratyphi B Genome Sequencing Project"/>
            <person name="McClelland M."/>
            <person name="Sanderson E.K."/>
            <person name="Porwollik S."/>
            <person name="Spieth J."/>
            <person name="Clifton W.S."/>
            <person name="Fulton R."/>
            <person name="Cordes M."/>
            <person name="Wollam A."/>
            <person name="Shah N."/>
            <person name="Pepin K."/>
            <person name="Bhonagiri V."/>
            <person name="Nash W."/>
            <person name="Johnson M."/>
            <person name="Thiruvilangam P."/>
            <person name="Wilson R."/>
        </authorList>
    </citation>
    <scope>NUCLEOTIDE SEQUENCE [LARGE SCALE GENOMIC DNA]</scope>
    <source>
        <strain>ATCC BAA-1250 / SPB7</strain>
    </source>
</reference>
<sequence length="113" mass="13006">MHTSELLKHIYDINLSYLLLAQRLIVQDKASAMFRLGINEEMANTLGALTLPQMVKLAETNQLVCHFRFDDHQTITRLTQDSRVDDLQQIHTGIMLSTRLLNEVDDTARKKRA</sequence>